<name>MNMA_MYCPA</name>
<dbReference type="EC" id="2.8.1.13" evidence="1"/>
<dbReference type="EMBL" id="AE016958">
    <property type="protein sequence ID" value="AAS05605.1"/>
    <property type="molecule type" value="Genomic_DNA"/>
</dbReference>
<dbReference type="RefSeq" id="WP_010949817.1">
    <property type="nucleotide sequence ID" value="NZ_CP106873.1"/>
</dbReference>
<dbReference type="SMR" id="Q73VF7"/>
<dbReference type="STRING" id="262316.MAP_3057c"/>
<dbReference type="KEGG" id="mpa:MAP_3057c"/>
<dbReference type="eggNOG" id="COG0482">
    <property type="taxonomic scope" value="Bacteria"/>
</dbReference>
<dbReference type="HOGENOM" id="CLU_035188_0_2_11"/>
<dbReference type="Proteomes" id="UP000000580">
    <property type="component" value="Chromosome"/>
</dbReference>
<dbReference type="GO" id="GO:0005737">
    <property type="term" value="C:cytoplasm"/>
    <property type="evidence" value="ECO:0007669"/>
    <property type="project" value="UniProtKB-SubCell"/>
</dbReference>
<dbReference type="GO" id="GO:0005524">
    <property type="term" value="F:ATP binding"/>
    <property type="evidence" value="ECO:0007669"/>
    <property type="project" value="UniProtKB-KW"/>
</dbReference>
<dbReference type="GO" id="GO:0000049">
    <property type="term" value="F:tRNA binding"/>
    <property type="evidence" value="ECO:0007669"/>
    <property type="project" value="UniProtKB-KW"/>
</dbReference>
<dbReference type="GO" id="GO:0103016">
    <property type="term" value="F:tRNA-uridine 2-sulfurtransferase activity"/>
    <property type="evidence" value="ECO:0007669"/>
    <property type="project" value="UniProtKB-EC"/>
</dbReference>
<dbReference type="GO" id="GO:0002143">
    <property type="term" value="P:tRNA wobble position uridine thiolation"/>
    <property type="evidence" value="ECO:0007669"/>
    <property type="project" value="TreeGrafter"/>
</dbReference>
<dbReference type="CDD" id="cd01998">
    <property type="entry name" value="MnmA_TRMU-like"/>
    <property type="match status" value="1"/>
</dbReference>
<dbReference type="FunFam" id="3.40.50.620:FF:000057">
    <property type="entry name" value="tRNA-specific 2-thiouridylase MnmA"/>
    <property type="match status" value="1"/>
</dbReference>
<dbReference type="Gene3D" id="2.30.30.280">
    <property type="entry name" value="Adenine nucleotide alpha hydrolases-like domains"/>
    <property type="match status" value="1"/>
</dbReference>
<dbReference type="Gene3D" id="3.40.50.620">
    <property type="entry name" value="HUPs"/>
    <property type="match status" value="1"/>
</dbReference>
<dbReference type="Gene3D" id="2.40.30.10">
    <property type="entry name" value="Translation factors"/>
    <property type="match status" value="1"/>
</dbReference>
<dbReference type="HAMAP" id="MF_00144">
    <property type="entry name" value="tRNA_thiouridyl_MnmA"/>
    <property type="match status" value="1"/>
</dbReference>
<dbReference type="InterPro" id="IPR004506">
    <property type="entry name" value="MnmA-like"/>
</dbReference>
<dbReference type="InterPro" id="IPR046885">
    <property type="entry name" value="MnmA-like_C"/>
</dbReference>
<dbReference type="InterPro" id="IPR046884">
    <property type="entry name" value="MnmA-like_central"/>
</dbReference>
<dbReference type="InterPro" id="IPR023382">
    <property type="entry name" value="MnmA-like_central_sf"/>
</dbReference>
<dbReference type="InterPro" id="IPR014729">
    <property type="entry name" value="Rossmann-like_a/b/a_fold"/>
</dbReference>
<dbReference type="NCBIfam" id="NF001138">
    <property type="entry name" value="PRK00143.1"/>
    <property type="match status" value="1"/>
</dbReference>
<dbReference type="NCBIfam" id="TIGR00420">
    <property type="entry name" value="trmU"/>
    <property type="match status" value="1"/>
</dbReference>
<dbReference type="PANTHER" id="PTHR11933:SF5">
    <property type="entry name" value="MITOCHONDRIAL TRNA-SPECIFIC 2-THIOURIDYLASE 1"/>
    <property type="match status" value="1"/>
</dbReference>
<dbReference type="PANTHER" id="PTHR11933">
    <property type="entry name" value="TRNA 5-METHYLAMINOMETHYL-2-THIOURIDYLATE -METHYLTRANSFERASE"/>
    <property type="match status" value="1"/>
</dbReference>
<dbReference type="Pfam" id="PF03054">
    <property type="entry name" value="tRNA_Me_trans"/>
    <property type="match status" value="1"/>
</dbReference>
<dbReference type="Pfam" id="PF20258">
    <property type="entry name" value="tRNA_Me_trans_C"/>
    <property type="match status" value="1"/>
</dbReference>
<dbReference type="Pfam" id="PF20259">
    <property type="entry name" value="tRNA_Me_trans_M"/>
    <property type="match status" value="1"/>
</dbReference>
<dbReference type="SUPFAM" id="SSF52402">
    <property type="entry name" value="Adenine nucleotide alpha hydrolases-like"/>
    <property type="match status" value="1"/>
</dbReference>
<organism>
    <name type="scientific">Mycolicibacterium paratuberculosis (strain ATCC BAA-968 / K-10)</name>
    <name type="common">Mycobacterium paratuberculosis</name>
    <dbReference type="NCBI Taxonomy" id="262316"/>
    <lineage>
        <taxon>Bacteria</taxon>
        <taxon>Bacillati</taxon>
        <taxon>Actinomycetota</taxon>
        <taxon>Actinomycetes</taxon>
        <taxon>Mycobacteriales</taxon>
        <taxon>Mycobacteriaceae</taxon>
        <taxon>Mycobacterium</taxon>
        <taxon>Mycobacterium avium complex (MAC)</taxon>
    </lineage>
</organism>
<sequence length="358" mass="37572">MRVLAAMSGGVDSSVAAARMVDAGHDVVGVHLALSTAPGTLRTGSRGCCSKEDASDARRVADVLGIPFYVWDFAEKFQADVIDEFLSAYARGETPNPCVTCNQKIKFSALSAKAVALGFDAVATGHYARLSGGRLRRAVDKDKDQSYVLAVLSAEQLRHAAFPIGDTPKPQIREEAARRGLAVAEKPDSHDICFIPSGNTRAFLGERIGVRRGAVVDADGTVLAEHDGVHGFTIGQRKGLGIAGPGPDGRPRYVTAIDADTATVRVGEASDLDVREMLGRAVVFTSGTAPSGPFECAVQVRAHGETADAVAELVGDELVVRLRAPLRGVAPGQTLALYRRDPDGDEVLGSATIAGTSR</sequence>
<protein>
    <recommendedName>
        <fullName evidence="1">tRNA-specific 2-thiouridylase MnmA</fullName>
        <ecNumber evidence="1">2.8.1.13</ecNumber>
    </recommendedName>
</protein>
<proteinExistence type="inferred from homology"/>
<accession>Q73VF7</accession>
<evidence type="ECO:0000255" key="1">
    <source>
        <dbReference type="HAMAP-Rule" id="MF_00144"/>
    </source>
</evidence>
<reference key="1">
    <citation type="journal article" date="2005" name="Proc. Natl. Acad. Sci. U.S.A.">
        <title>The complete genome sequence of Mycobacterium avium subspecies paratuberculosis.</title>
        <authorList>
            <person name="Li L."/>
            <person name="Bannantine J.P."/>
            <person name="Zhang Q."/>
            <person name="Amonsin A."/>
            <person name="May B.J."/>
            <person name="Alt D."/>
            <person name="Banerji N."/>
            <person name="Kanjilal S."/>
            <person name="Kapur V."/>
        </authorList>
    </citation>
    <scope>NUCLEOTIDE SEQUENCE [LARGE SCALE GENOMIC DNA]</scope>
    <source>
        <strain>ATCC BAA-968 / K-10</strain>
    </source>
</reference>
<gene>
    <name evidence="1" type="primary">mnmA</name>
    <name type="synonym">trmU</name>
    <name type="ordered locus">MAP_3057c</name>
</gene>
<comment type="function">
    <text evidence="1">Catalyzes the 2-thiolation of uridine at the wobble position (U34) of tRNA, leading to the formation of s(2)U34.</text>
</comment>
<comment type="catalytic activity">
    <reaction evidence="1">
        <text>S-sulfanyl-L-cysteinyl-[protein] + uridine(34) in tRNA + AH2 + ATP = 2-thiouridine(34) in tRNA + L-cysteinyl-[protein] + A + AMP + diphosphate + H(+)</text>
        <dbReference type="Rhea" id="RHEA:47032"/>
        <dbReference type="Rhea" id="RHEA-COMP:10131"/>
        <dbReference type="Rhea" id="RHEA-COMP:11726"/>
        <dbReference type="Rhea" id="RHEA-COMP:11727"/>
        <dbReference type="Rhea" id="RHEA-COMP:11728"/>
        <dbReference type="ChEBI" id="CHEBI:13193"/>
        <dbReference type="ChEBI" id="CHEBI:15378"/>
        <dbReference type="ChEBI" id="CHEBI:17499"/>
        <dbReference type="ChEBI" id="CHEBI:29950"/>
        <dbReference type="ChEBI" id="CHEBI:30616"/>
        <dbReference type="ChEBI" id="CHEBI:33019"/>
        <dbReference type="ChEBI" id="CHEBI:61963"/>
        <dbReference type="ChEBI" id="CHEBI:65315"/>
        <dbReference type="ChEBI" id="CHEBI:87170"/>
        <dbReference type="ChEBI" id="CHEBI:456215"/>
        <dbReference type="EC" id="2.8.1.13"/>
    </reaction>
</comment>
<comment type="subcellular location">
    <subcellularLocation>
        <location evidence="1">Cytoplasm</location>
    </subcellularLocation>
</comment>
<comment type="similarity">
    <text evidence="1">Belongs to the MnmA/TRMU family.</text>
</comment>
<keyword id="KW-0067">ATP-binding</keyword>
<keyword id="KW-0963">Cytoplasm</keyword>
<keyword id="KW-1015">Disulfide bond</keyword>
<keyword id="KW-0547">Nucleotide-binding</keyword>
<keyword id="KW-1185">Reference proteome</keyword>
<keyword id="KW-0694">RNA-binding</keyword>
<keyword id="KW-0808">Transferase</keyword>
<keyword id="KW-0819">tRNA processing</keyword>
<keyword id="KW-0820">tRNA-binding</keyword>
<feature type="chain" id="PRO_1000009539" description="tRNA-specific 2-thiouridylase MnmA">
    <location>
        <begin position="1"/>
        <end position="358"/>
    </location>
</feature>
<feature type="region of interest" description="Interaction with tRNA" evidence="1">
    <location>
        <begin position="143"/>
        <end position="145"/>
    </location>
</feature>
<feature type="active site" description="Nucleophile" evidence="1">
    <location>
        <position position="101"/>
    </location>
</feature>
<feature type="active site" description="Cysteine persulfide intermediate" evidence="1">
    <location>
        <position position="193"/>
    </location>
</feature>
<feature type="binding site" evidence="1">
    <location>
        <begin position="6"/>
        <end position="13"/>
    </location>
    <ligand>
        <name>ATP</name>
        <dbReference type="ChEBI" id="CHEBI:30616"/>
    </ligand>
</feature>
<feature type="binding site" evidence="1">
    <location>
        <position position="32"/>
    </location>
    <ligand>
        <name>ATP</name>
        <dbReference type="ChEBI" id="CHEBI:30616"/>
    </ligand>
</feature>
<feature type="binding site" evidence="1">
    <location>
        <position position="125"/>
    </location>
    <ligand>
        <name>ATP</name>
        <dbReference type="ChEBI" id="CHEBI:30616"/>
    </ligand>
</feature>
<feature type="site" description="Interaction with tRNA" evidence="1">
    <location>
        <position position="126"/>
    </location>
</feature>
<feature type="site" description="Interaction with tRNA" evidence="1">
    <location>
        <position position="333"/>
    </location>
</feature>
<feature type="disulfide bond" description="Alternate" evidence="1">
    <location>
        <begin position="101"/>
        <end position="193"/>
    </location>
</feature>